<protein>
    <recommendedName>
        <fullName>Probable diacylglycerol kinase 3</fullName>
        <shortName>DAG kinase 3</shortName>
        <ecNumber>2.7.1.107</ecNumber>
    </recommendedName>
    <alternativeName>
        <fullName>Diglyceride kinase 3</fullName>
        <shortName>DGK-3</shortName>
    </alternativeName>
</protein>
<accession>Q03603</accession>
<dbReference type="EC" id="2.7.1.107"/>
<dbReference type="EMBL" id="Z19155">
    <property type="protein sequence ID" value="CAA79558.3"/>
    <property type="molecule type" value="Genomic_DNA"/>
</dbReference>
<dbReference type="PIR" id="S28273">
    <property type="entry name" value="S28273"/>
</dbReference>
<dbReference type="RefSeq" id="NP_499031.3">
    <property type="nucleotide sequence ID" value="NM_066630.4"/>
</dbReference>
<dbReference type="SMR" id="Q03603"/>
<dbReference type="FunCoup" id="Q03603">
    <property type="interactions" value="1246"/>
</dbReference>
<dbReference type="STRING" id="6239.F54G8.2.1"/>
<dbReference type="PaxDb" id="6239-F54G8.2"/>
<dbReference type="EnsemblMetazoa" id="F54G8.2.1">
    <property type="protein sequence ID" value="F54G8.2.1"/>
    <property type="gene ID" value="WBGene00000960"/>
</dbReference>
<dbReference type="GeneID" id="186262"/>
<dbReference type="KEGG" id="cel:CELE_F54G8.2"/>
<dbReference type="UCSC" id="F54G8.2">
    <property type="organism name" value="c. elegans"/>
</dbReference>
<dbReference type="AGR" id="WB:WBGene00000960"/>
<dbReference type="CTD" id="186262"/>
<dbReference type="WormBase" id="F54G8.2">
    <property type="protein sequence ID" value="CE46230"/>
    <property type="gene ID" value="WBGene00000960"/>
    <property type="gene designation" value="dgk-3"/>
</dbReference>
<dbReference type="eggNOG" id="KOG1169">
    <property type="taxonomic scope" value="Eukaryota"/>
</dbReference>
<dbReference type="GeneTree" id="ENSGT00940000168305"/>
<dbReference type="HOGENOM" id="CLU_003770_1_0_1"/>
<dbReference type="InParanoid" id="Q03603"/>
<dbReference type="OMA" id="MSTFETR"/>
<dbReference type="OrthoDB" id="242257at2759"/>
<dbReference type="PhylomeDB" id="Q03603"/>
<dbReference type="Reactome" id="R-CEL-114508">
    <property type="pathway name" value="Effects of PIP2 hydrolysis"/>
</dbReference>
<dbReference type="PRO" id="PR:Q03603"/>
<dbReference type="Proteomes" id="UP000001940">
    <property type="component" value="Chromosome III"/>
</dbReference>
<dbReference type="Bgee" id="WBGene00000960">
    <property type="expression patterns" value="Expressed in larva and 3 other cell types or tissues"/>
</dbReference>
<dbReference type="GO" id="GO:0005886">
    <property type="term" value="C:plasma membrane"/>
    <property type="evidence" value="ECO:0000318"/>
    <property type="project" value="GO_Central"/>
</dbReference>
<dbReference type="GO" id="GO:0005524">
    <property type="term" value="F:ATP binding"/>
    <property type="evidence" value="ECO:0007669"/>
    <property type="project" value="UniProtKB-KW"/>
</dbReference>
<dbReference type="GO" id="GO:0004143">
    <property type="term" value="F:ATP-dependent diacylglycerol kinase activity"/>
    <property type="evidence" value="ECO:0000318"/>
    <property type="project" value="GO_Central"/>
</dbReference>
<dbReference type="GO" id="GO:0005509">
    <property type="term" value="F:calcium ion binding"/>
    <property type="evidence" value="ECO:0007669"/>
    <property type="project" value="InterPro"/>
</dbReference>
<dbReference type="GO" id="GO:0008270">
    <property type="term" value="F:zinc ion binding"/>
    <property type="evidence" value="ECO:0007669"/>
    <property type="project" value="UniProtKB-KW"/>
</dbReference>
<dbReference type="GO" id="GO:0046339">
    <property type="term" value="P:diacylglycerol metabolic process"/>
    <property type="evidence" value="ECO:0000318"/>
    <property type="project" value="GO_Central"/>
</dbReference>
<dbReference type="GO" id="GO:0035556">
    <property type="term" value="P:intracellular signal transduction"/>
    <property type="evidence" value="ECO:0000318"/>
    <property type="project" value="GO_Central"/>
</dbReference>
<dbReference type="GO" id="GO:0042048">
    <property type="term" value="P:olfactory behavior"/>
    <property type="evidence" value="ECO:0000315"/>
    <property type="project" value="UniProtKB"/>
</dbReference>
<dbReference type="GO" id="GO:0006654">
    <property type="term" value="P:phosphatidic acid biosynthetic process"/>
    <property type="evidence" value="ECO:0000318"/>
    <property type="project" value="GO_Central"/>
</dbReference>
<dbReference type="GO" id="GO:0007200">
    <property type="term" value="P:phospholipase C-activating G protein-coupled receptor signaling pathway"/>
    <property type="evidence" value="ECO:0007669"/>
    <property type="project" value="InterPro"/>
</dbReference>
<dbReference type="GO" id="GO:0048169">
    <property type="term" value="P:regulation of long-term neuronal synaptic plasticity"/>
    <property type="evidence" value="ECO:0000315"/>
    <property type="project" value="WormBase"/>
</dbReference>
<dbReference type="GO" id="GO:0043052">
    <property type="term" value="P:thermotaxis"/>
    <property type="evidence" value="ECO:0000315"/>
    <property type="project" value="WormBase"/>
</dbReference>
<dbReference type="CDD" id="cd20851">
    <property type="entry name" value="C1_DGK_typeI_like_rpt2"/>
    <property type="match status" value="1"/>
</dbReference>
<dbReference type="CDD" id="cd20799">
    <property type="entry name" value="C1_DGK_typeI_rpt1"/>
    <property type="match status" value="1"/>
</dbReference>
<dbReference type="CDD" id="cd00051">
    <property type="entry name" value="EFh"/>
    <property type="match status" value="1"/>
</dbReference>
<dbReference type="FunFam" id="1.10.238.10:FF:000590">
    <property type="entry name" value="Diacylglycerol kinase"/>
    <property type="match status" value="1"/>
</dbReference>
<dbReference type="FunFam" id="1.10.238.110:FF:000011">
    <property type="entry name" value="Diacylglycerol kinase"/>
    <property type="match status" value="1"/>
</dbReference>
<dbReference type="FunFam" id="2.60.200.40:FF:000033">
    <property type="entry name" value="Diacylglycerol kinase"/>
    <property type="match status" value="1"/>
</dbReference>
<dbReference type="FunFam" id="3.30.60.20:FF:000089">
    <property type="entry name" value="Diacylglycerol kinase"/>
    <property type="match status" value="1"/>
</dbReference>
<dbReference type="FunFam" id="3.30.60.20:FF:000091">
    <property type="entry name" value="Diacylglycerol kinase"/>
    <property type="match status" value="1"/>
</dbReference>
<dbReference type="FunFam" id="3.40.50.10330:FF:000020">
    <property type="entry name" value="Diacylglycerol kinase"/>
    <property type="match status" value="1"/>
</dbReference>
<dbReference type="Gene3D" id="2.60.200.40">
    <property type="match status" value="1"/>
</dbReference>
<dbReference type="Gene3D" id="3.30.60.20">
    <property type="match status" value="2"/>
</dbReference>
<dbReference type="Gene3D" id="1.10.238.110">
    <property type="entry name" value="Diacylglycerol kinase alpha"/>
    <property type="match status" value="1"/>
</dbReference>
<dbReference type="Gene3D" id="1.10.238.10">
    <property type="entry name" value="EF-hand"/>
    <property type="match status" value="1"/>
</dbReference>
<dbReference type="Gene3D" id="3.40.50.10330">
    <property type="entry name" value="Probable inorganic polyphosphate/atp-NAD kinase, domain 1"/>
    <property type="match status" value="1"/>
</dbReference>
<dbReference type="InterPro" id="IPR017438">
    <property type="entry name" value="ATP-NAD_kinase_N"/>
</dbReference>
<dbReference type="InterPro" id="IPR046349">
    <property type="entry name" value="C1-like_sf"/>
</dbReference>
<dbReference type="InterPro" id="IPR029477">
    <property type="entry name" value="DAG_kinase_typeI_N"/>
</dbReference>
<dbReference type="InterPro" id="IPR037607">
    <property type="entry name" value="DGK"/>
</dbReference>
<dbReference type="InterPro" id="IPR038199">
    <property type="entry name" value="DGK_typeI_N_sf"/>
</dbReference>
<dbReference type="InterPro" id="IPR000756">
    <property type="entry name" value="Diacylglycerol_kin_accessory"/>
</dbReference>
<dbReference type="InterPro" id="IPR001206">
    <property type="entry name" value="Diacylglycerol_kinase_cat_dom"/>
</dbReference>
<dbReference type="InterPro" id="IPR011992">
    <property type="entry name" value="EF-hand-dom_pair"/>
</dbReference>
<dbReference type="InterPro" id="IPR018247">
    <property type="entry name" value="EF_Hand_1_Ca_BS"/>
</dbReference>
<dbReference type="InterPro" id="IPR002048">
    <property type="entry name" value="EF_hand_dom"/>
</dbReference>
<dbReference type="InterPro" id="IPR016064">
    <property type="entry name" value="NAD/diacylglycerol_kinase_sf"/>
</dbReference>
<dbReference type="InterPro" id="IPR002219">
    <property type="entry name" value="PE/DAG-bd"/>
</dbReference>
<dbReference type="PANTHER" id="PTHR11255">
    <property type="entry name" value="DIACYLGLYCEROL KINASE"/>
    <property type="match status" value="1"/>
</dbReference>
<dbReference type="PANTHER" id="PTHR11255:SF48">
    <property type="entry name" value="DIACYLGLYCEROL KINASE 1"/>
    <property type="match status" value="1"/>
</dbReference>
<dbReference type="Pfam" id="PF00130">
    <property type="entry name" value="C1_1"/>
    <property type="match status" value="2"/>
</dbReference>
<dbReference type="Pfam" id="PF14513">
    <property type="entry name" value="DAG_kinase_N"/>
    <property type="match status" value="1"/>
</dbReference>
<dbReference type="Pfam" id="PF00609">
    <property type="entry name" value="DAGK_acc"/>
    <property type="match status" value="1"/>
</dbReference>
<dbReference type="Pfam" id="PF00781">
    <property type="entry name" value="DAGK_cat"/>
    <property type="match status" value="1"/>
</dbReference>
<dbReference type="Pfam" id="PF13499">
    <property type="entry name" value="EF-hand_7"/>
    <property type="match status" value="1"/>
</dbReference>
<dbReference type="SMART" id="SM00109">
    <property type="entry name" value="C1"/>
    <property type="match status" value="2"/>
</dbReference>
<dbReference type="SMART" id="SM00045">
    <property type="entry name" value="DAGKa"/>
    <property type="match status" value="1"/>
</dbReference>
<dbReference type="SMART" id="SM00046">
    <property type="entry name" value="DAGKc"/>
    <property type="match status" value="1"/>
</dbReference>
<dbReference type="SMART" id="SM00054">
    <property type="entry name" value="EFh"/>
    <property type="match status" value="2"/>
</dbReference>
<dbReference type="SUPFAM" id="SSF57889">
    <property type="entry name" value="Cysteine-rich domain"/>
    <property type="match status" value="2"/>
</dbReference>
<dbReference type="SUPFAM" id="SSF47473">
    <property type="entry name" value="EF-hand"/>
    <property type="match status" value="2"/>
</dbReference>
<dbReference type="SUPFAM" id="SSF111331">
    <property type="entry name" value="NAD kinase/diacylglycerol kinase-like"/>
    <property type="match status" value="1"/>
</dbReference>
<dbReference type="PROSITE" id="PS50146">
    <property type="entry name" value="DAGK"/>
    <property type="match status" value="1"/>
</dbReference>
<dbReference type="PROSITE" id="PS00018">
    <property type="entry name" value="EF_HAND_1"/>
    <property type="match status" value="2"/>
</dbReference>
<dbReference type="PROSITE" id="PS50222">
    <property type="entry name" value="EF_HAND_2"/>
    <property type="match status" value="2"/>
</dbReference>
<dbReference type="PROSITE" id="PS00479">
    <property type="entry name" value="ZF_DAG_PE_1"/>
    <property type="match status" value="2"/>
</dbReference>
<dbReference type="PROSITE" id="PS50081">
    <property type="entry name" value="ZF_DAG_PE_2"/>
    <property type="match status" value="2"/>
</dbReference>
<proteinExistence type="inferred from homology"/>
<feature type="chain" id="PRO_0000218471" description="Probable diacylglycerol kinase 3">
    <location>
        <begin position="1"/>
        <end position="795"/>
    </location>
</feature>
<feature type="domain" description="EF-hand 1" evidence="3">
    <location>
        <begin position="170"/>
        <end position="205"/>
    </location>
</feature>
<feature type="domain" description="EF-hand 2" evidence="3">
    <location>
        <begin position="215"/>
        <end position="250"/>
    </location>
</feature>
<feature type="domain" description="DAGKc" evidence="4">
    <location>
        <begin position="423"/>
        <end position="558"/>
    </location>
</feature>
<feature type="zinc finger region" description="Phorbol-ester/DAG-type 1" evidence="2">
    <location>
        <begin position="265"/>
        <end position="316"/>
    </location>
</feature>
<feature type="zinc finger region" description="Phorbol-ester/DAG-type 2" evidence="2">
    <location>
        <begin position="329"/>
        <end position="375"/>
    </location>
</feature>
<feature type="binding site" evidence="3">
    <location>
        <position position="183"/>
    </location>
    <ligand>
        <name>Ca(2+)</name>
        <dbReference type="ChEBI" id="CHEBI:29108"/>
        <label>1</label>
    </ligand>
</feature>
<feature type="binding site" evidence="3">
    <location>
        <position position="185"/>
    </location>
    <ligand>
        <name>Ca(2+)</name>
        <dbReference type="ChEBI" id="CHEBI:29108"/>
        <label>1</label>
    </ligand>
</feature>
<feature type="binding site" evidence="3">
    <location>
        <position position="187"/>
    </location>
    <ligand>
        <name>Ca(2+)</name>
        <dbReference type="ChEBI" id="CHEBI:29108"/>
        <label>1</label>
    </ligand>
</feature>
<feature type="binding site" evidence="3">
    <location>
        <position position="194"/>
    </location>
    <ligand>
        <name>Ca(2+)</name>
        <dbReference type="ChEBI" id="CHEBI:29108"/>
        <label>1</label>
    </ligand>
</feature>
<feature type="binding site" evidence="3">
    <location>
        <position position="228"/>
    </location>
    <ligand>
        <name>Ca(2+)</name>
        <dbReference type="ChEBI" id="CHEBI:29108"/>
        <label>2</label>
    </ligand>
</feature>
<feature type="binding site" evidence="3">
    <location>
        <position position="230"/>
    </location>
    <ligand>
        <name>Ca(2+)</name>
        <dbReference type="ChEBI" id="CHEBI:29108"/>
        <label>2</label>
    </ligand>
</feature>
<feature type="binding site" evidence="3">
    <location>
        <position position="232"/>
    </location>
    <ligand>
        <name>Ca(2+)</name>
        <dbReference type="ChEBI" id="CHEBI:29108"/>
        <label>2</label>
    </ligand>
</feature>
<feature type="binding site" evidence="3">
    <location>
        <position position="239"/>
    </location>
    <ligand>
        <name>Ca(2+)</name>
        <dbReference type="ChEBI" id="CHEBI:29108"/>
        <label>2</label>
    </ligand>
</feature>
<reference key="1">
    <citation type="journal article" date="1994" name="Nature">
        <title>2.2 Mb of contiguous nucleotide sequence from chromosome III of C. elegans.</title>
        <authorList>
            <person name="Wilson R."/>
            <person name="Ainscough R."/>
            <person name="Anderson K."/>
            <person name="Baynes C."/>
            <person name="Berks M."/>
            <person name="Bonfield J."/>
            <person name="Burton J."/>
            <person name="Connell M."/>
            <person name="Copsey T."/>
            <person name="Cooper J."/>
            <person name="Coulson A."/>
            <person name="Craxton M."/>
            <person name="Dear S."/>
            <person name="Du Z."/>
            <person name="Durbin R."/>
            <person name="Favello A."/>
            <person name="Fraser A."/>
            <person name="Fulton L."/>
            <person name="Gardner A."/>
            <person name="Green P."/>
            <person name="Hawkins T."/>
            <person name="Hillier L."/>
            <person name="Jier M."/>
            <person name="Johnston L."/>
            <person name="Jones M."/>
            <person name="Kershaw J."/>
            <person name="Kirsten J."/>
            <person name="Laisster N."/>
            <person name="Latreille P."/>
            <person name="Lightning J."/>
            <person name="Lloyd C."/>
            <person name="Mortimore B."/>
            <person name="O'Callaghan M."/>
            <person name="Parsons J."/>
            <person name="Percy C."/>
            <person name="Rifken L."/>
            <person name="Roopra A."/>
            <person name="Saunders D."/>
            <person name="Shownkeen R."/>
            <person name="Sims M."/>
            <person name="Smaldon N."/>
            <person name="Smith A."/>
            <person name="Smith M."/>
            <person name="Sonnhammer E."/>
            <person name="Staden R."/>
            <person name="Sulston J."/>
            <person name="Thierry-Mieg J."/>
            <person name="Thomas K."/>
            <person name="Vaudin M."/>
            <person name="Vaughan K."/>
            <person name="Waterston R."/>
            <person name="Watson A."/>
            <person name="Weinstock L."/>
            <person name="Wilkinson-Sproat J."/>
            <person name="Wohldman P."/>
        </authorList>
    </citation>
    <scope>NUCLEOTIDE SEQUENCE [LARGE SCALE GENOMIC DNA]</scope>
    <source>
        <strain>Bristol N2</strain>
    </source>
</reference>
<reference key="2">
    <citation type="journal article" date="1998" name="Science">
        <title>Genome sequence of the nematode C. elegans: a platform for investigating biology.</title>
        <authorList>
            <consortium name="The C. elegans sequencing consortium"/>
        </authorList>
    </citation>
    <scope>NUCLEOTIDE SEQUENCE [LARGE SCALE GENOMIC DNA]</scope>
    <source>
        <strain>Bristol N2</strain>
    </source>
</reference>
<reference key="3">
    <citation type="journal article" date="2006" name="Nat. Neurosci.">
        <title>A diacylglycerol kinase modulates long-term thermotactic behavioral plasticity in C. elegans.</title>
        <authorList>
            <person name="Biron D."/>
            <person name="Shibuya M."/>
            <person name="Gabel C."/>
            <person name="Wasserman S.M."/>
            <person name="Clark D.A."/>
            <person name="Brown A."/>
            <person name="Sengupta P."/>
            <person name="Samuel A.D."/>
        </authorList>
    </citation>
    <scope>FUNCTION</scope>
    <scope>DISRUPTION PHENOTYPE</scope>
</reference>
<reference key="4">
    <citation type="journal article" date="2006" name="Proc. Natl. Acad. Sci. U.S.A.">
        <title>Goalpha regulates olfactory adaptation by antagonizing Gqalpha-DAG signaling in Caenorhabditis elegans.</title>
        <authorList>
            <person name="Matsuki M."/>
            <person name="Kunitomo H."/>
            <person name="Iino Y."/>
        </authorList>
    </citation>
    <scope>FUNCTION</scope>
    <scope>DISRUPTION PHENOTYPE</scope>
</reference>
<name>DGK3_CAEEL</name>
<keyword id="KW-0067">ATP-binding</keyword>
<keyword id="KW-0106">Calcium</keyword>
<keyword id="KW-0418">Kinase</keyword>
<keyword id="KW-0479">Metal-binding</keyword>
<keyword id="KW-0547">Nucleotide-binding</keyword>
<keyword id="KW-1185">Reference proteome</keyword>
<keyword id="KW-0677">Repeat</keyword>
<keyword id="KW-0808">Transferase</keyword>
<keyword id="KW-0862">Zinc</keyword>
<keyword id="KW-0863">Zinc-finger</keyword>
<evidence type="ECO:0000250" key="1"/>
<evidence type="ECO:0000255" key="2">
    <source>
        <dbReference type="PROSITE-ProRule" id="PRU00226"/>
    </source>
</evidence>
<evidence type="ECO:0000255" key="3">
    <source>
        <dbReference type="PROSITE-ProRule" id="PRU00448"/>
    </source>
</evidence>
<evidence type="ECO:0000255" key="4">
    <source>
        <dbReference type="PROSITE-ProRule" id="PRU00783"/>
    </source>
</evidence>
<evidence type="ECO:0000269" key="5">
    <source>
    </source>
</evidence>
<evidence type="ECO:0000269" key="6">
    <source>
    </source>
</evidence>
<evidence type="ECO:0000305" key="7"/>
<comment type="function">
    <text evidence="5 6">Involved in AFD-neuron mediated thermotaxis. Regulates behavior to environmental temperature. Thought to have a role in olfactory adaptation by affecting diacylglycerol levels.</text>
</comment>
<comment type="catalytic activity">
    <reaction>
        <text>a 1,2-diacyl-sn-glycerol + ATP = a 1,2-diacyl-sn-glycero-3-phosphate + ADP + H(+)</text>
        <dbReference type="Rhea" id="RHEA:10272"/>
        <dbReference type="ChEBI" id="CHEBI:15378"/>
        <dbReference type="ChEBI" id="CHEBI:17815"/>
        <dbReference type="ChEBI" id="CHEBI:30616"/>
        <dbReference type="ChEBI" id="CHEBI:58608"/>
        <dbReference type="ChEBI" id="CHEBI:456216"/>
        <dbReference type="EC" id="2.7.1.107"/>
    </reaction>
</comment>
<comment type="subunit">
    <text evidence="1">Monomer.</text>
</comment>
<comment type="disruption phenotype">
    <text evidence="5 6">Slow to adapt to new temperature levels. Dgk-3 and dgk-1 double mutant shows defects in olfactory adaptation.</text>
</comment>
<comment type="similarity">
    <text evidence="7">Belongs to the eukaryotic diacylglycerol kinase family.</text>
</comment>
<organism>
    <name type="scientific">Caenorhabditis elegans</name>
    <dbReference type="NCBI Taxonomy" id="6239"/>
    <lineage>
        <taxon>Eukaryota</taxon>
        <taxon>Metazoa</taxon>
        <taxon>Ecdysozoa</taxon>
        <taxon>Nematoda</taxon>
        <taxon>Chromadorea</taxon>
        <taxon>Rhabditida</taxon>
        <taxon>Rhabditina</taxon>
        <taxon>Rhabditomorpha</taxon>
        <taxon>Rhabditoidea</taxon>
        <taxon>Rhabditidae</taxon>
        <taxon>Peloderinae</taxon>
        <taxon>Caenorhabditis</taxon>
    </lineage>
</organism>
<sequence>MLLSPEQFSRLSEYAAYSRRKLKDMLSDFQQDGKFYSYLSVDGQTINIDGFRAFLIDYFGADLPSDLVDQLFLSFSKPPIKERRTSLFEDAISTVRAKFSESLSGRMAGLNIAGGSGQQTDRSQSSEPQALVCIPEDDVMGPRVANNDSQEPRIPLKPLICTLSLLEADTPENKLDVVFHVYDSDGNGFLDKSEIDGIIEQMMNVARYQQWDTIELEQVIRQMMVDIDYDNDGIVSFDEWRRGGLTNIPLLVLLGFDTEMKEDGSHVWRLRHFTKPTYCNACCSILVGWGGKQGLSCSLCKYTVHERCVRSAATNCIRTYSSRQQDKLYHHWQDANATAKCVKCKATVGVFQGKGCRWCHNYVHHRCMSALAQECDLGALVHHILPPTHIFPAFLERKTSTSLKNHNFSSHSASLLQAVSPSNDCRPLLVLVNPKSGGKQGVKILQKFEYLLNPRQVYDLSKTGPEPGLQLFSTLKNCNILVCGGDGTIGWVLESMDKMTFPHGRPPVAVLPLGTGNDLARCLRWGGGYENENLHKILEQIEKSSLIDMDRWQIKIEITENKSARRASEKGDTPPYSIINNYFSIGVDASIAHRFHVMREKFPEKFNSRMRNKLWYFELGTSETLSSSCKNLHEQIDILCDGESIDLGQDASLEGIALLNIPSIYGGSNLWGRSRKSKGRMPGLFPMKNAEKMQLQTRVQDIGDGLIELVGLESAMQMGQIKAGVRGARRLSQCSTVVIQTHKSFPMQIDGEPWMQPPCIIQITHKNQAKMLVAAAPRKRSSWMLLKRQSTNDDN</sequence>
<gene>
    <name type="primary">dgk-3</name>
    <name type="ORF">F54G8.2</name>
</gene>